<organism>
    <name type="scientific">Escherichia coli O9:H4 (strain HS)</name>
    <dbReference type="NCBI Taxonomy" id="331112"/>
    <lineage>
        <taxon>Bacteria</taxon>
        <taxon>Pseudomonadati</taxon>
        <taxon>Pseudomonadota</taxon>
        <taxon>Gammaproteobacteria</taxon>
        <taxon>Enterobacterales</taxon>
        <taxon>Enterobacteriaceae</taxon>
        <taxon>Escherichia</taxon>
    </lineage>
</organism>
<reference key="1">
    <citation type="journal article" date="2008" name="J. Bacteriol.">
        <title>The pangenome structure of Escherichia coli: comparative genomic analysis of E. coli commensal and pathogenic isolates.</title>
        <authorList>
            <person name="Rasko D.A."/>
            <person name="Rosovitz M.J."/>
            <person name="Myers G.S.A."/>
            <person name="Mongodin E.F."/>
            <person name="Fricke W.F."/>
            <person name="Gajer P."/>
            <person name="Crabtree J."/>
            <person name="Sebaihia M."/>
            <person name="Thomson N.R."/>
            <person name="Chaudhuri R."/>
            <person name="Henderson I.R."/>
            <person name="Sperandio V."/>
            <person name="Ravel J."/>
        </authorList>
    </citation>
    <scope>NUCLEOTIDE SEQUENCE [LARGE SCALE GENOMIC DNA]</scope>
    <source>
        <strain>HS</strain>
    </source>
</reference>
<accession>A8A6P9</accession>
<sequence>MSLLQFSGLFVVWLLCTLFIATLTWFEFRRVRFNFNVFFSLLFLLTFFFGFPLTSVLVFRFDVGVAPPEILLQALLSAGCFYAVYYVTYKTRLRKRVADVPRRPLFTMNRVETNLTWVILMGIALVSVGIFFMHNGFLLFRLNSYSQIFSSEVSGVALKRFFYFFIPAMLVVYFLRQDSKAWLFFLVSTVAFGLLTYMIVGGTRANIIIAFAIFLFIGIIRGWISLWMLAAAGVLGIVGMFWLALKRYGMNVSGDEAFYTFLYLTRDTFSPWENLALLLQNYDNIDFQGLAPIVRDFYVFIPSWLWPGRPSMVLNSANYFTWEVLNNHSGLAISPTLIGSLVVMGGALFIPLGAIVVGLIIKWFDWLYELGNRETNRYKAAILHSFCFGAIFNMIVLAREGLDSFVSRVVFFIVVFGACLMIAKLLYWLFESAGLIHKRTKSSLRTQVEG</sequence>
<proteinExistence type="inferred from homology"/>
<gene>
    <name evidence="1" type="primary">wzyE</name>
    <name type="ordered locus">EcHS_A4011</name>
</gene>
<name>WZYE_ECOHS</name>
<dbReference type="EMBL" id="CP000802">
    <property type="protein sequence ID" value="ABV08203.1"/>
    <property type="molecule type" value="Genomic_DNA"/>
</dbReference>
<dbReference type="RefSeq" id="WP_000055132.1">
    <property type="nucleotide sequence ID" value="NC_009800.1"/>
</dbReference>
<dbReference type="GeneID" id="75204784"/>
<dbReference type="KEGG" id="ecx:EcHS_A4011"/>
<dbReference type="HOGENOM" id="CLU_049711_0_0_6"/>
<dbReference type="UniPathway" id="UPA00566"/>
<dbReference type="GO" id="GO:0005886">
    <property type="term" value="C:plasma membrane"/>
    <property type="evidence" value="ECO:0007669"/>
    <property type="project" value="UniProtKB-SubCell"/>
</dbReference>
<dbReference type="GO" id="GO:0009246">
    <property type="term" value="P:enterobacterial common antigen biosynthetic process"/>
    <property type="evidence" value="ECO:0007669"/>
    <property type="project" value="UniProtKB-UniRule"/>
</dbReference>
<dbReference type="HAMAP" id="MF_01003">
    <property type="entry name" value="WzyE"/>
    <property type="match status" value="1"/>
</dbReference>
<dbReference type="InterPro" id="IPR010691">
    <property type="entry name" value="WzyE"/>
</dbReference>
<dbReference type="NCBIfam" id="NF002820">
    <property type="entry name" value="PRK02975.1"/>
    <property type="match status" value="1"/>
</dbReference>
<dbReference type="Pfam" id="PF06899">
    <property type="entry name" value="WzyE"/>
    <property type="match status" value="1"/>
</dbReference>
<comment type="function">
    <text evidence="1">Probably involved in the polymerization of enterobacterial common antigen (ECA) trisaccharide repeat units.</text>
</comment>
<comment type="pathway">
    <text evidence="1">Bacterial outer membrane biogenesis; enterobacterial common antigen biosynthesis.</text>
</comment>
<comment type="subunit">
    <text evidence="1">Probably part of a complex composed of WzxE, WzyE and WzzE.</text>
</comment>
<comment type="subcellular location">
    <subcellularLocation>
        <location evidence="1">Cell inner membrane</location>
        <topology evidence="1">Multi-pass membrane protein</topology>
    </subcellularLocation>
</comment>
<comment type="similarity">
    <text evidence="1">Belongs to the WzyE family.</text>
</comment>
<evidence type="ECO:0000255" key="1">
    <source>
        <dbReference type="HAMAP-Rule" id="MF_01003"/>
    </source>
</evidence>
<feature type="chain" id="PRO_1000062757" description="Probable ECA polymerase">
    <location>
        <begin position="1"/>
        <end position="450"/>
    </location>
</feature>
<feature type="transmembrane region" description="Helical" evidence="1">
    <location>
        <begin position="6"/>
        <end position="26"/>
    </location>
</feature>
<feature type="transmembrane region" description="Helical" evidence="1">
    <location>
        <begin position="37"/>
        <end position="57"/>
    </location>
</feature>
<feature type="transmembrane region" description="Helical" evidence="1">
    <location>
        <begin position="63"/>
        <end position="83"/>
    </location>
</feature>
<feature type="transmembrane region" description="Helical" evidence="1">
    <location>
        <begin position="118"/>
        <end position="138"/>
    </location>
</feature>
<feature type="transmembrane region" description="Helical" evidence="1">
    <location>
        <begin position="155"/>
        <end position="175"/>
    </location>
</feature>
<feature type="transmembrane region" description="Helical" evidence="1">
    <location>
        <begin position="181"/>
        <end position="201"/>
    </location>
</feature>
<feature type="transmembrane region" description="Helical" evidence="1">
    <location>
        <begin position="207"/>
        <end position="227"/>
    </location>
</feature>
<feature type="transmembrane region" description="Helical" evidence="1">
    <location>
        <begin position="228"/>
        <end position="248"/>
    </location>
</feature>
<feature type="transmembrane region" description="Helical" evidence="1">
    <location>
        <begin position="341"/>
        <end position="361"/>
    </location>
</feature>
<feature type="transmembrane region" description="Helical" evidence="1">
    <location>
        <begin position="378"/>
        <end position="398"/>
    </location>
</feature>
<feature type="transmembrane region" description="Helical" evidence="1">
    <location>
        <begin position="410"/>
        <end position="430"/>
    </location>
</feature>
<protein>
    <recommendedName>
        <fullName evidence="1">Probable ECA polymerase</fullName>
    </recommendedName>
</protein>
<keyword id="KW-0997">Cell inner membrane</keyword>
<keyword id="KW-1003">Cell membrane</keyword>
<keyword id="KW-0472">Membrane</keyword>
<keyword id="KW-0812">Transmembrane</keyword>
<keyword id="KW-1133">Transmembrane helix</keyword>